<dbReference type="EMBL" id="AJ414696">
    <property type="protein sequence ID" value="CAC93958.1"/>
    <property type="molecule type" value="Genomic_DNA"/>
</dbReference>
<dbReference type="EMBL" id="AJ703801">
    <property type="protein sequence ID" value="CAG28269.1"/>
    <property type="molecule type" value="Genomic_DNA"/>
</dbReference>
<dbReference type="EMBL" id="AJ748296">
    <property type="protein sequence ID" value="CAG38823.1"/>
    <property type="molecule type" value="Genomic_DNA"/>
</dbReference>
<dbReference type="RefSeq" id="NP_666591.1">
    <property type="nucleotide sequence ID" value="NC_004087.1"/>
</dbReference>
<dbReference type="SMR" id="Q8QL51"/>
<dbReference type="KEGG" id="vg:951392"/>
<dbReference type="OrthoDB" id="23157at10239"/>
<dbReference type="Proteomes" id="UP000002270">
    <property type="component" value="Genome"/>
</dbReference>
<dbReference type="Proteomes" id="UP000223181">
    <property type="component" value="Segment"/>
</dbReference>
<dbReference type="CDD" id="cd22267">
    <property type="entry name" value="AcrID1"/>
    <property type="match status" value="1"/>
</dbReference>
<dbReference type="Gene3D" id="3.30.160.300">
    <property type="match status" value="1"/>
</dbReference>
<dbReference type="InterPro" id="IPR009804">
    <property type="entry name" value="SIFV_Orf14"/>
</dbReference>
<dbReference type="NCBIfam" id="NF033952">
    <property type="entry name" value="AcrID1_fam"/>
    <property type="match status" value="1"/>
</dbReference>
<dbReference type="Pfam" id="PF07118">
    <property type="entry name" value="DUF1374"/>
    <property type="match status" value="1"/>
</dbReference>
<protein>
    <recommendedName>
        <fullName>Uncharacterized protein 102</fullName>
    </recommendedName>
</protein>
<organism>
    <name type="scientific">Sulfolobus islandicus rod-shaped virus 1</name>
    <name type="common">SIRV-1</name>
    <name type="synonym">Sulfolobus virus SIRV-1</name>
    <dbReference type="NCBI Taxonomy" id="157898"/>
    <lineage>
        <taxon>Viruses</taxon>
        <taxon>Adnaviria</taxon>
        <taxon>Zilligvirae</taxon>
        <taxon>Taleaviricota</taxon>
        <taxon>Tokiviricetes</taxon>
        <taxon>Ligamenvirales</taxon>
        <taxon>Rudiviridae</taxon>
        <taxon>Icerudivirus</taxon>
        <taxon>Icerudivirus SIRV1</taxon>
    </lineage>
</organism>
<organismHost>
    <name type="scientific">Saccharolobus islandicus</name>
    <name type="common">Sulfolobus islandicus</name>
    <dbReference type="NCBI Taxonomy" id="43080"/>
</organismHost>
<reference key="1">
    <citation type="journal article" date="2001" name="Virology">
        <title>Sequences and replication of genomes of the archaeal rudiviruses SIRV1 and SIRV2: relationships to the archaeal lipothrixvirus SIFV and some eukaryal viruses.</title>
        <authorList>
            <person name="Peng X."/>
            <person name="Blum H."/>
            <person name="She Q."/>
            <person name="Mallok S."/>
            <person name="Bruegger K."/>
            <person name="Garrett R.A."/>
            <person name="Zillig W."/>
            <person name="Prangishvili D."/>
        </authorList>
    </citation>
    <scope>NUCLEOTIDE SEQUENCE [LARGE SCALE GENOMIC DNA]</scope>
    <source>
        <strain>Isolate variant VIII</strain>
    </source>
</reference>
<reference key="2">
    <citation type="journal article" date="2004" name="Mol. Microbiol.">
        <title>Multiple variants of the archaeal DNA rudivirus SIRV1 in a single host and a novel mechanism of genomic variation.</title>
        <authorList>
            <person name="Peng X."/>
            <person name="Kessler A."/>
            <person name="Phan H."/>
            <person name="Garrett R.A."/>
            <person name="Prangishvili D."/>
        </authorList>
    </citation>
    <scope>NUCLEOTIDE SEQUENCE [LARGE SCALE GENOMIC DNA]</scope>
    <source>
        <strain>Isolate variant II</strain>
        <strain>Isolate variant XX</strain>
    </source>
</reference>
<name>Y102_SIRV1</name>
<accession>Q8QL51</accession>
<accession>Q5TJB5</accession>
<proteinExistence type="predicted"/>
<keyword id="KW-1185">Reference proteome</keyword>
<gene>
    <name type="ORF">102</name>
</gene>
<sequence length="102" mass="12538">MEFEDLDVVLYVFFENPEMKSFEFEFKQLFETTESGLRYLIGVPDSRNKIKNNNEIIEEFIYYQNDDIVTKLIFYYTKGTNRIYIRKIYGWKEKRLESEDEE</sequence>
<feature type="chain" id="PRO_0000342329" description="Uncharacterized protein 102">
    <location>
        <begin position="1"/>
        <end position="102"/>
    </location>
</feature>